<comment type="function">
    <text evidence="1">Catalyzes the thiamine diphosphate-dependent decarboxylation of 2-oxoglutarate and the subsequent addition of the resulting succinic semialdehyde-thiamine pyrophosphate anion to isochorismate to yield 2-succinyl-5-enolpyruvyl-6-hydroxy-3-cyclohexene-1-carboxylate (SEPHCHC).</text>
</comment>
<comment type="catalytic activity">
    <reaction evidence="1">
        <text>isochorismate + 2-oxoglutarate + H(+) = 5-enolpyruvoyl-6-hydroxy-2-succinyl-cyclohex-3-ene-1-carboxylate + CO2</text>
        <dbReference type="Rhea" id="RHEA:25593"/>
        <dbReference type="ChEBI" id="CHEBI:15378"/>
        <dbReference type="ChEBI" id="CHEBI:16526"/>
        <dbReference type="ChEBI" id="CHEBI:16810"/>
        <dbReference type="ChEBI" id="CHEBI:29780"/>
        <dbReference type="ChEBI" id="CHEBI:58818"/>
        <dbReference type="EC" id="2.2.1.9"/>
    </reaction>
</comment>
<comment type="cofactor">
    <cofactor evidence="1">
        <name>Mg(2+)</name>
        <dbReference type="ChEBI" id="CHEBI:18420"/>
    </cofactor>
    <cofactor evidence="1">
        <name>Mn(2+)</name>
        <dbReference type="ChEBI" id="CHEBI:29035"/>
    </cofactor>
</comment>
<comment type="cofactor">
    <cofactor evidence="1">
        <name>thiamine diphosphate</name>
        <dbReference type="ChEBI" id="CHEBI:58937"/>
    </cofactor>
    <text evidence="1">Binds 1 thiamine pyrophosphate per subunit.</text>
</comment>
<comment type="pathway">
    <text evidence="1">Quinol/quinone metabolism; 1,4-dihydroxy-2-naphthoate biosynthesis; 1,4-dihydroxy-2-naphthoate from chorismate: step 2/7.</text>
</comment>
<comment type="pathway">
    <text evidence="1">Quinol/quinone metabolism; menaquinone biosynthesis.</text>
</comment>
<comment type="subunit">
    <text evidence="1">Homodimer.</text>
</comment>
<comment type="similarity">
    <text evidence="1">Belongs to the TPP enzyme family. MenD subfamily.</text>
</comment>
<proteinExistence type="inferred from homology"/>
<protein>
    <recommendedName>
        <fullName evidence="1">2-succinyl-5-enolpyruvyl-6-hydroxy-3-cyclohexene-1-carboxylate synthase</fullName>
        <shortName evidence="1">SEPHCHC synthase</shortName>
        <ecNumber evidence="1">2.2.1.9</ecNumber>
    </recommendedName>
    <alternativeName>
        <fullName evidence="1">Menaquinone biosynthesis protein MenD</fullName>
    </alternativeName>
</protein>
<organism>
    <name type="scientific">Escherichia fergusonii (strain ATCC 35469 / DSM 13698 / CCUG 18766 / IAM 14443 / JCM 21226 / LMG 7866 / NBRC 102419 / NCTC 12128 / CDC 0568-73)</name>
    <dbReference type="NCBI Taxonomy" id="585054"/>
    <lineage>
        <taxon>Bacteria</taxon>
        <taxon>Pseudomonadati</taxon>
        <taxon>Pseudomonadota</taxon>
        <taxon>Gammaproteobacteria</taxon>
        <taxon>Enterobacterales</taxon>
        <taxon>Enterobacteriaceae</taxon>
        <taxon>Escherichia</taxon>
    </lineage>
</organism>
<accession>B7LM66</accession>
<reference key="1">
    <citation type="journal article" date="2009" name="PLoS Genet.">
        <title>Organised genome dynamics in the Escherichia coli species results in highly diverse adaptive paths.</title>
        <authorList>
            <person name="Touchon M."/>
            <person name="Hoede C."/>
            <person name="Tenaillon O."/>
            <person name="Barbe V."/>
            <person name="Baeriswyl S."/>
            <person name="Bidet P."/>
            <person name="Bingen E."/>
            <person name="Bonacorsi S."/>
            <person name="Bouchier C."/>
            <person name="Bouvet O."/>
            <person name="Calteau A."/>
            <person name="Chiapello H."/>
            <person name="Clermont O."/>
            <person name="Cruveiller S."/>
            <person name="Danchin A."/>
            <person name="Diard M."/>
            <person name="Dossat C."/>
            <person name="Karoui M.E."/>
            <person name="Frapy E."/>
            <person name="Garry L."/>
            <person name="Ghigo J.M."/>
            <person name="Gilles A.M."/>
            <person name="Johnson J."/>
            <person name="Le Bouguenec C."/>
            <person name="Lescat M."/>
            <person name="Mangenot S."/>
            <person name="Martinez-Jehanne V."/>
            <person name="Matic I."/>
            <person name="Nassif X."/>
            <person name="Oztas S."/>
            <person name="Petit M.A."/>
            <person name="Pichon C."/>
            <person name="Rouy Z."/>
            <person name="Ruf C.S."/>
            <person name="Schneider D."/>
            <person name="Tourret J."/>
            <person name="Vacherie B."/>
            <person name="Vallenet D."/>
            <person name="Medigue C."/>
            <person name="Rocha E.P.C."/>
            <person name="Denamur E."/>
        </authorList>
    </citation>
    <scope>NUCLEOTIDE SEQUENCE [LARGE SCALE GENOMIC DNA]</scope>
    <source>
        <strain>ATCC 35469 / DSM 13698 / BCRC 15582 / CCUG 18766 / IAM 14443 / JCM 21226 / LMG 7866 / NBRC 102419 / NCTC 12128 / CDC 0568-73</strain>
    </source>
</reference>
<dbReference type="EC" id="2.2.1.9" evidence="1"/>
<dbReference type="EMBL" id="CU928158">
    <property type="protein sequence ID" value="CAQ88439.1"/>
    <property type="molecule type" value="Genomic_DNA"/>
</dbReference>
<dbReference type="RefSeq" id="WP_015953292.1">
    <property type="nucleotide sequence ID" value="NC_011740.1"/>
</dbReference>
<dbReference type="SMR" id="B7LM66"/>
<dbReference type="GeneID" id="75058037"/>
<dbReference type="KEGG" id="efe:EFER_0904"/>
<dbReference type="HOGENOM" id="CLU_006051_3_0_6"/>
<dbReference type="OrthoDB" id="9791859at2"/>
<dbReference type="UniPathway" id="UPA00079"/>
<dbReference type="UniPathway" id="UPA01057">
    <property type="reaction ID" value="UER00164"/>
</dbReference>
<dbReference type="Proteomes" id="UP000000745">
    <property type="component" value="Chromosome"/>
</dbReference>
<dbReference type="GO" id="GO:0070204">
    <property type="term" value="F:2-succinyl-5-enolpyruvyl-6-hydroxy-3-cyclohexene-1-carboxylic-acid synthase activity"/>
    <property type="evidence" value="ECO:0007669"/>
    <property type="project" value="UniProtKB-UniRule"/>
</dbReference>
<dbReference type="GO" id="GO:0000287">
    <property type="term" value="F:magnesium ion binding"/>
    <property type="evidence" value="ECO:0007669"/>
    <property type="project" value="UniProtKB-UniRule"/>
</dbReference>
<dbReference type="GO" id="GO:0030145">
    <property type="term" value="F:manganese ion binding"/>
    <property type="evidence" value="ECO:0007669"/>
    <property type="project" value="UniProtKB-UniRule"/>
</dbReference>
<dbReference type="GO" id="GO:0030976">
    <property type="term" value="F:thiamine pyrophosphate binding"/>
    <property type="evidence" value="ECO:0007669"/>
    <property type="project" value="UniProtKB-UniRule"/>
</dbReference>
<dbReference type="GO" id="GO:0009234">
    <property type="term" value="P:menaquinone biosynthetic process"/>
    <property type="evidence" value="ECO:0007669"/>
    <property type="project" value="UniProtKB-UniRule"/>
</dbReference>
<dbReference type="CDD" id="cd07037">
    <property type="entry name" value="TPP_PYR_MenD"/>
    <property type="match status" value="1"/>
</dbReference>
<dbReference type="CDD" id="cd02009">
    <property type="entry name" value="TPP_SHCHC_synthase"/>
    <property type="match status" value="1"/>
</dbReference>
<dbReference type="FunFam" id="3.40.50.1220:FF:000010">
    <property type="entry name" value="2-succinyl-5-enolpyruvyl-6-hydroxy-3-cyclohexene-1-carboxylate synthase"/>
    <property type="match status" value="1"/>
</dbReference>
<dbReference type="FunFam" id="3.40.50.970:FF:000029">
    <property type="entry name" value="2-succinyl-5-enolpyruvyl-6-hydroxy-3-cyclohexene-1-carboxylate synthase"/>
    <property type="match status" value="1"/>
</dbReference>
<dbReference type="Gene3D" id="3.40.50.970">
    <property type="match status" value="2"/>
</dbReference>
<dbReference type="Gene3D" id="3.40.50.1220">
    <property type="entry name" value="TPP-binding domain"/>
    <property type="match status" value="1"/>
</dbReference>
<dbReference type="HAMAP" id="MF_01659">
    <property type="entry name" value="MenD"/>
    <property type="match status" value="1"/>
</dbReference>
<dbReference type="InterPro" id="IPR004433">
    <property type="entry name" value="MenaQ_synth_MenD"/>
</dbReference>
<dbReference type="InterPro" id="IPR032264">
    <property type="entry name" value="MenD_middle"/>
</dbReference>
<dbReference type="InterPro" id="IPR029061">
    <property type="entry name" value="THDP-binding"/>
</dbReference>
<dbReference type="InterPro" id="IPR012001">
    <property type="entry name" value="Thiamin_PyroP_enz_TPP-bd_dom"/>
</dbReference>
<dbReference type="InterPro" id="IPR011766">
    <property type="entry name" value="TPP_enzyme_TPP-bd"/>
</dbReference>
<dbReference type="NCBIfam" id="TIGR00173">
    <property type="entry name" value="menD"/>
    <property type="match status" value="1"/>
</dbReference>
<dbReference type="PANTHER" id="PTHR42916">
    <property type="entry name" value="2-SUCCINYL-5-ENOLPYRUVYL-6-HYDROXY-3-CYCLOHEXENE-1-CARBOXYLATE SYNTHASE"/>
    <property type="match status" value="1"/>
</dbReference>
<dbReference type="PANTHER" id="PTHR42916:SF1">
    <property type="entry name" value="PROTEIN PHYLLO, CHLOROPLASTIC"/>
    <property type="match status" value="1"/>
</dbReference>
<dbReference type="Pfam" id="PF02775">
    <property type="entry name" value="TPP_enzyme_C"/>
    <property type="match status" value="1"/>
</dbReference>
<dbReference type="Pfam" id="PF16582">
    <property type="entry name" value="TPP_enzyme_M_2"/>
    <property type="match status" value="1"/>
</dbReference>
<dbReference type="Pfam" id="PF02776">
    <property type="entry name" value="TPP_enzyme_N"/>
    <property type="match status" value="1"/>
</dbReference>
<dbReference type="PIRSF" id="PIRSF004983">
    <property type="entry name" value="MenD"/>
    <property type="match status" value="1"/>
</dbReference>
<dbReference type="SUPFAM" id="SSF52518">
    <property type="entry name" value="Thiamin diphosphate-binding fold (THDP-binding)"/>
    <property type="match status" value="2"/>
</dbReference>
<gene>
    <name evidence="1" type="primary">menD</name>
    <name type="ordered locus">EFER_0904</name>
</gene>
<evidence type="ECO:0000255" key="1">
    <source>
        <dbReference type="HAMAP-Rule" id="MF_01659"/>
    </source>
</evidence>
<sequence>MSVSAFNRRWAAVILEALTRHGVRHICIAPGSRSTPLTLAAAENSAFIHHTHFDERGLGHLALGLAKVSKQPVAVIVTSGTAVANLYPALIEAGLTGEKLILLTADRPPELIDCGANQAIRQPGMFASHPTHSISLPRPTQDISARWLVSTIDHALGTLHAGGVHINCPFAEPLYGEMDDTGLSWQQRLGDWWQDDKPWLREAPRLESEKQRDWFFWRQKRGVVVAGRMSAEEGKKVALWAQTLGWPLIGDVLSQTGQPLPCADLWLGNAKATSELQQAQIVVQLGSSLTGKRLLQWQASCEPEEYWIVDDIEGRLDPAHHRGRRLIANIADWLELHPAEKRQPWCIEIPRLAEQAMQAVIARRDAFGEAQLAHRISDYLPEQGQLFVGNSLVVRLIDALSQLPAGYPVYSNRGASGIDGLLSTAAGVQRASGKPTLAIVGDLSALYDLNALALLRQVSAPLVLIVVNNNGGQIFSLLPTPKSERERFYLMPQNVHFEHAAAMFELKYHRPQNWQELETALADAWRTPTTTVIEMVVNDTDGAQTLQQLLAQVSHL</sequence>
<name>MEND_ESCF3</name>
<keyword id="KW-0460">Magnesium</keyword>
<keyword id="KW-0464">Manganese</keyword>
<keyword id="KW-0474">Menaquinone biosynthesis</keyword>
<keyword id="KW-0479">Metal-binding</keyword>
<keyword id="KW-0786">Thiamine pyrophosphate</keyword>
<keyword id="KW-0808">Transferase</keyword>
<feature type="chain" id="PRO_1000187077" description="2-succinyl-5-enolpyruvyl-6-hydroxy-3-cyclohexene-1-carboxylate synthase">
    <location>
        <begin position="1"/>
        <end position="556"/>
    </location>
</feature>